<comment type="function">
    <text evidence="2">Component of the ubiquinol-cytochrome c reductase complex (complex III or cytochrome b-c1 complex) that is part of the mitochondrial respiratory chain. The b-c1 complex mediates electron transfer from ubiquinol to cytochrome c. Contributes to the generation of a proton gradient across the mitochondrial membrane that is then used for ATP synthesis.</text>
</comment>
<comment type="cofactor">
    <cofactor evidence="2">
        <name>heme b</name>
        <dbReference type="ChEBI" id="CHEBI:60344"/>
    </cofactor>
    <text evidence="2">Binds 2 heme b groups non-covalently.</text>
</comment>
<comment type="subunit">
    <text evidence="2">The cytochrome bc1 complex contains 11 subunits: 3 respiratory subunits (MT-CYB, CYC1 and UQCRFS1), 2 core proteins (UQCRC1 and UQCRC2) and 6 low-molecular weight proteins (UQCRH/QCR6, UQCRB/QCR7, UQCRQ/QCR8, UQCR10/QCR9, UQCR11/QCR10 and a cleavage product of UQCRFS1). This cytochrome bc1 complex then forms a dimer.</text>
</comment>
<comment type="subcellular location">
    <subcellularLocation>
        <location evidence="2">Mitochondrion inner membrane</location>
        <topology evidence="2">Multi-pass membrane protein</topology>
    </subcellularLocation>
</comment>
<comment type="miscellaneous">
    <text evidence="1">Heme 1 (or BL or b562) is low-potential and absorbs at about 562 nm, and heme 2 (or BH or b566) is high-potential and absorbs at about 566 nm.</text>
</comment>
<comment type="similarity">
    <text evidence="3 4">Belongs to the cytochrome b family.</text>
</comment>
<comment type="caution">
    <text evidence="2">The full-length protein contains only eight transmembrane helices, not nine as predicted by bioinformatics tools.</text>
</comment>
<proteinExistence type="inferred from homology"/>
<geneLocation type="mitochondrion"/>
<feature type="chain" id="PRO_0000061366" description="Cytochrome b">
    <location>
        <begin position="1"/>
        <end position="380"/>
    </location>
</feature>
<feature type="transmembrane region" description="Helical" evidence="2">
    <location>
        <begin position="34"/>
        <end position="54"/>
    </location>
</feature>
<feature type="transmembrane region" description="Helical" evidence="2">
    <location>
        <begin position="78"/>
        <end position="99"/>
    </location>
</feature>
<feature type="transmembrane region" description="Helical" evidence="2">
    <location>
        <begin position="114"/>
        <end position="134"/>
    </location>
</feature>
<feature type="transmembrane region" description="Helical" evidence="2">
    <location>
        <begin position="179"/>
        <end position="199"/>
    </location>
</feature>
<feature type="transmembrane region" description="Helical" evidence="2">
    <location>
        <begin position="227"/>
        <end position="247"/>
    </location>
</feature>
<feature type="transmembrane region" description="Helical" evidence="2">
    <location>
        <begin position="289"/>
        <end position="309"/>
    </location>
</feature>
<feature type="transmembrane region" description="Helical" evidence="2">
    <location>
        <begin position="321"/>
        <end position="341"/>
    </location>
</feature>
<feature type="transmembrane region" description="Helical" evidence="2">
    <location>
        <begin position="348"/>
        <end position="368"/>
    </location>
</feature>
<feature type="binding site" description="axial binding residue" evidence="2">
    <location>
        <position position="84"/>
    </location>
    <ligand>
        <name>heme b</name>
        <dbReference type="ChEBI" id="CHEBI:60344"/>
        <label>b562</label>
    </ligand>
    <ligandPart>
        <name>Fe</name>
        <dbReference type="ChEBI" id="CHEBI:18248"/>
    </ligandPart>
</feature>
<feature type="binding site" description="axial binding residue" evidence="2">
    <location>
        <position position="98"/>
    </location>
    <ligand>
        <name>heme b</name>
        <dbReference type="ChEBI" id="CHEBI:60344"/>
        <label>b566</label>
    </ligand>
    <ligandPart>
        <name>Fe</name>
        <dbReference type="ChEBI" id="CHEBI:18248"/>
    </ligandPart>
</feature>
<feature type="binding site" description="axial binding residue" evidence="2">
    <location>
        <position position="183"/>
    </location>
    <ligand>
        <name>heme b</name>
        <dbReference type="ChEBI" id="CHEBI:60344"/>
        <label>b562</label>
    </ligand>
    <ligandPart>
        <name>Fe</name>
        <dbReference type="ChEBI" id="CHEBI:18248"/>
    </ligandPart>
</feature>
<feature type="binding site" description="axial binding residue" evidence="2">
    <location>
        <position position="197"/>
    </location>
    <ligand>
        <name>heme b</name>
        <dbReference type="ChEBI" id="CHEBI:60344"/>
        <label>b566</label>
    </ligand>
    <ligandPart>
        <name>Fe</name>
        <dbReference type="ChEBI" id="CHEBI:18248"/>
    </ligandPart>
</feature>
<feature type="binding site" evidence="2">
    <location>
        <position position="202"/>
    </location>
    <ligand>
        <name>a ubiquinone</name>
        <dbReference type="ChEBI" id="CHEBI:16389"/>
    </ligand>
</feature>
<reference key="1">
    <citation type="journal article" date="1998" name="Mol. Biol. Evol.">
        <title>Body size effects and rates of cytochrome-b evolution in tube-nosed seabirds.</title>
        <authorList>
            <person name="Nunn G.B."/>
            <person name="Stanley S.E."/>
        </authorList>
    </citation>
    <scope>NUCLEOTIDE SEQUENCE [GENOMIC DNA]</scope>
    <source>
        <strain>Isolate SGDP-MI-1</strain>
    </source>
</reference>
<accession>O79219</accession>
<dbReference type="EMBL" id="AF076074">
    <property type="protein sequence ID" value="AAC68631.1"/>
    <property type="molecule type" value="Genomic_DNA"/>
</dbReference>
<dbReference type="SMR" id="O79219"/>
<dbReference type="GO" id="GO:0005743">
    <property type="term" value="C:mitochondrial inner membrane"/>
    <property type="evidence" value="ECO:0007669"/>
    <property type="project" value="UniProtKB-SubCell"/>
</dbReference>
<dbReference type="GO" id="GO:0045275">
    <property type="term" value="C:respiratory chain complex III"/>
    <property type="evidence" value="ECO:0007669"/>
    <property type="project" value="InterPro"/>
</dbReference>
<dbReference type="GO" id="GO:0046872">
    <property type="term" value="F:metal ion binding"/>
    <property type="evidence" value="ECO:0007669"/>
    <property type="project" value="UniProtKB-KW"/>
</dbReference>
<dbReference type="GO" id="GO:0008121">
    <property type="term" value="F:ubiquinol-cytochrome-c reductase activity"/>
    <property type="evidence" value="ECO:0007669"/>
    <property type="project" value="InterPro"/>
</dbReference>
<dbReference type="GO" id="GO:0006122">
    <property type="term" value="P:mitochondrial electron transport, ubiquinol to cytochrome c"/>
    <property type="evidence" value="ECO:0007669"/>
    <property type="project" value="TreeGrafter"/>
</dbReference>
<dbReference type="CDD" id="cd00290">
    <property type="entry name" value="cytochrome_b_C"/>
    <property type="match status" value="1"/>
</dbReference>
<dbReference type="CDD" id="cd00284">
    <property type="entry name" value="Cytochrome_b_N"/>
    <property type="match status" value="1"/>
</dbReference>
<dbReference type="FunFam" id="1.20.810.10:FF:000002">
    <property type="entry name" value="Cytochrome b"/>
    <property type="match status" value="1"/>
</dbReference>
<dbReference type="Gene3D" id="1.20.810.10">
    <property type="entry name" value="Cytochrome Bc1 Complex, Chain C"/>
    <property type="match status" value="1"/>
</dbReference>
<dbReference type="InterPro" id="IPR005798">
    <property type="entry name" value="Cyt_b/b6_C"/>
</dbReference>
<dbReference type="InterPro" id="IPR036150">
    <property type="entry name" value="Cyt_b/b6_C_sf"/>
</dbReference>
<dbReference type="InterPro" id="IPR005797">
    <property type="entry name" value="Cyt_b/b6_N"/>
</dbReference>
<dbReference type="InterPro" id="IPR027387">
    <property type="entry name" value="Cytb/b6-like_sf"/>
</dbReference>
<dbReference type="InterPro" id="IPR030689">
    <property type="entry name" value="Cytochrome_b"/>
</dbReference>
<dbReference type="InterPro" id="IPR048260">
    <property type="entry name" value="Cytochrome_b_C_euk/bac"/>
</dbReference>
<dbReference type="InterPro" id="IPR048259">
    <property type="entry name" value="Cytochrome_b_N_euk/bac"/>
</dbReference>
<dbReference type="InterPro" id="IPR016174">
    <property type="entry name" value="Di-haem_cyt_TM"/>
</dbReference>
<dbReference type="PANTHER" id="PTHR19271">
    <property type="entry name" value="CYTOCHROME B"/>
    <property type="match status" value="1"/>
</dbReference>
<dbReference type="PANTHER" id="PTHR19271:SF16">
    <property type="entry name" value="CYTOCHROME B"/>
    <property type="match status" value="1"/>
</dbReference>
<dbReference type="Pfam" id="PF00032">
    <property type="entry name" value="Cytochrom_B_C"/>
    <property type="match status" value="1"/>
</dbReference>
<dbReference type="Pfam" id="PF00033">
    <property type="entry name" value="Cytochrome_B"/>
    <property type="match status" value="1"/>
</dbReference>
<dbReference type="PIRSF" id="PIRSF038885">
    <property type="entry name" value="COB"/>
    <property type="match status" value="1"/>
</dbReference>
<dbReference type="SUPFAM" id="SSF81648">
    <property type="entry name" value="a domain/subunit of cytochrome bc1 complex (Ubiquinol-cytochrome c reductase)"/>
    <property type="match status" value="1"/>
</dbReference>
<dbReference type="SUPFAM" id="SSF81342">
    <property type="entry name" value="Transmembrane di-heme cytochromes"/>
    <property type="match status" value="1"/>
</dbReference>
<dbReference type="PROSITE" id="PS51003">
    <property type="entry name" value="CYTB_CTER"/>
    <property type="match status" value="1"/>
</dbReference>
<dbReference type="PROSITE" id="PS51002">
    <property type="entry name" value="CYTB_NTER"/>
    <property type="match status" value="1"/>
</dbReference>
<sequence length="380" mass="42698">MAPNIRKSHPLLKMINNSLIDLPSPSNISAWWNFGSLLGICLTTQILTGLLLAMHYTADTTLAFSSVAHTCRNVQYGWLIRNLHANGASFFFICIYLHIGRGFYYGSYLHKETWNTGVILLLTLMATAFVGYVLPWGQMSFWGATVITNLFSAIPYIGQTLVEWAWGGFSVDNPTLTRFFALHFLLPFMIAGLTTIHLTFLHESGSNNPLGITSNCDKIPFHPYFTLKDILGFTLMLLPLTTLALFSPNLLGDPENFTPANPLITPPHIKPEWYFLFAYAILRSIPNKLGGVLALAASVLILFLIPFLHKAKQRTMTFRPISQLLFWILVTNLLILTWVGSQPVEHPFIIIGQLASITYFTILLVLFPITEALENKMLNY</sequence>
<keyword id="KW-0249">Electron transport</keyword>
<keyword id="KW-0349">Heme</keyword>
<keyword id="KW-0408">Iron</keyword>
<keyword id="KW-0472">Membrane</keyword>
<keyword id="KW-0479">Metal-binding</keyword>
<keyword id="KW-0496">Mitochondrion</keyword>
<keyword id="KW-0999">Mitochondrion inner membrane</keyword>
<keyword id="KW-0679">Respiratory chain</keyword>
<keyword id="KW-0812">Transmembrane</keyword>
<keyword id="KW-1133">Transmembrane helix</keyword>
<keyword id="KW-0813">Transport</keyword>
<keyword id="KW-0830">Ubiquinone</keyword>
<evidence type="ECO:0000250" key="1"/>
<evidence type="ECO:0000250" key="2">
    <source>
        <dbReference type="UniProtKB" id="P00157"/>
    </source>
</evidence>
<evidence type="ECO:0000255" key="3">
    <source>
        <dbReference type="PROSITE-ProRule" id="PRU00967"/>
    </source>
</evidence>
<evidence type="ECO:0000255" key="4">
    <source>
        <dbReference type="PROSITE-ProRule" id="PRU00968"/>
    </source>
</evidence>
<organism>
    <name type="scientific">Pelecanoides georgicus</name>
    <name type="common">South Georgia diving petrel</name>
    <dbReference type="NCBI Taxonomy" id="37078"/>
    <lineage>
        <taxon>Eukaryota</taxon>
        <taxon>Metazoa</taxon>
        <taxon>Chordata</taxon>
        <taxon>Craniata</taxon>
        <taxon>Vertebrata</taxon>
        <taxon>Euteleostomi</taxon>
        <taxon>Archelosauria</taxon>
        <taxon>Archosauria</taxon>
        <taxon>Dinosauria</taxon>
        <taxon>Saurischia</taxon>
        <taxon>Theropoda</taxon>
        <taxon>Coelurosauria</taxon>
        <taxon>Aves</taxon>
        <taxon>Neognathae</taxon>
        <taxon>Neoaves</taxon>
        <taxon>Aequornithes</taxon>
        <taxon>Procellariiformes</taxon>
        <taxon>Procellariidae</taxon>
        <taxon>Pelecanoides</taxon>
    </lineage>
</organism>
<gene>
    <name type="primary">MT-CYB</name>
    <name type="synonym">COB</name>
    <name type="synonym">CYTB</name>
    <name type="synonym">MTCYB</name>
</gene>
<protein>
    <recommendedName>
        <fullName>Cytochrome b</fullName>
    </recommendedName>
    <alternativeName>
        <fullName>Complex III subunit 3</fullName>
    </alternativeName>
    <alternativeName>
        <fullName>Complex III subunit III</fullName>
    </alternativeName>
    <alternativeName>
        <fullName>Cytochrome b-c1 complex subunit 3</fullName>
    </alternativeName>
    <alternativeName>
        <fullName>Ubiquinol-cytochrome-c reductase complex cytochrome b subunit</fullName>
    </alternativeName>
</protein>
<name>CYB_PELGE</name>